<organism>
    <name type="scientific">Escherichia coli O8 (strain IAI1)</name>
    <dbReference type="NCBI Taxonomy" id="585034"/>
    <lineage>
        <taxon>Bacteria</taxon>
        <taxon>Pseudomonadati</taxon>
        <taxon>Pseudomonadota</taxon>
        <taxon>Gammaproteobacteria</taxon>
        <taxon>Enterobacterales</taxon>
        <taxon>Enterobacteriaceae</taxon>
        <taxon>Escherichia</taxon>
    </lineage>
</organism>
<comment type="function">
    <text evidence="1">This protein is one of the early assembly proteins of the 50S ribosomal subunit, although it is not seen to bind rRNA by itself. It is important during the early stages of 50S assembly.</text>
</comment>
<comment type="subunit">
    <text evidence="1">Part of the 50S ribosomal subunit.</text>
</comment>
<comment type="similarity">
    <text evidence="1">Belongs to the universal ribosomal protein uL13 family.</text>
</comment>
<evidence type="ECO:0000255" key="1">
    <source>
        <dbReference type="HAMAP-Rule" id="MF_01366"/>
    </source>
</evidence>
<evidence type="ECO:0000305" key="2"/>
<sequence>MKTFTAKPETVKRDWYVVDATGKTLGRLATELARRLRGKHKAEYTPHVDTGDYIIVLNADKVAVTGNKRTDKVYYHHTGHIGGIKQATFEEMIARRPERVIEIAVKGMLPKGPLGRAMFRKLKVYAGNEHNHAAQQPQVLDI</sequence>
<accession>B7M0U3</accession>
<feature type="chain" id="PRO_1000144123" description="Large ribosomal subunit protein uL13">
    <location>
        <begin position="1"/>
        <end position="142"/>
    </location>
</feature>
<gene>
    <name evidence="1" type="primary">rplM</name>
    <name type="ordered locus">ECIAI1_3373</name>
</gene>
<keyword id="KW-0687">Ribonucleoprotein</keyword>
<keyword id="KW-0689">Ribosomal protein</keyword>
<protein>
    <recommendedName>
        <fullName evidence="1">Large ribosomal subunit protein uL13</fullName>
    </recommendedName>
    <alternativeName>
        <fullName evidence="2">50S ribosomal protein L13</fullName>
    </alternativeName>
</protein>
<reference key="1">
    <citation type="journal article" date="2009" name="PLoS Genet.">
        <title>Organised genome dynamics in the Escherichia coli species results in highly diverse adaptive paths.</title>
        <authorList>
            <person name="Touchon M."/>
            <person name="Hoede C."/>
            <person name="Tenaillon O."/>
            <person name="Barbe V."/>
            <person name="Baeriswyl S."/>
            <person name="Bidet P."/>
            <person name="Bingen E."/>
            <person name="Bonacorsi S."/>
            <person name="Bouchier C."/>
            <person name="Bouvet O."/>
            <person name="Calteau A."/>
            <person name="Chiapello H."/>
            <person name="Clermont O."/>
            <person name="Cruveiller S."/>
            <person name="Danchin A."/>
            <person name="Diard M."/>
            <person name="Dossat C."/>
            <person name="Karoui M.E."/>
            <person name="Frapy E."/>
            <person name="Garry L."/>
            <person name="Ghigo J.M."/>
            <person name="Gilles A.M."/>
            <person name="Johnson J."/>
            <person name="Le Bouguenec C."/>
            <person name="Lescat M."/>
            <person name="Mangenot S."/>
            <person name="Martinez-Jehanne V."/>
            <person name="Matic I."/>
            <person name="Nassif X."/>
            <person name="Oztas S."/>
            <person name="Petit M.A."/>
            <person name="Pichon C."/>
            <person name="Rouy Z."/>
            <person name="Ruf C.S."/>
            <person name="Schneider D."/>
            <person name="Tourret J."/>
            <person name="Vacherie B."/>
            <person name="Vallenet D."/>
            <person name="Medigue C."/>
            <person name="Rocha E.P.C."/>
            <person name="Denamur E."/>
        </authorList>
    </citation>
    <scope>NUCLEOTIDE SEQUENCE [LARGE SCALE GENOMIC DNA]</scope>
    <source>
        <strain>IAI1</strain>
    </source>
</reference>
<dbReference type="EMBL" id="CU928160">
    <property type="protein sequence ID" value="CAR00187.1"/>
    <property type="molecule type" value="Genomic_DNA"/>
</dbReference>
<dbReference type="RefSeq" id="WP_000847559.1">
    <property type="nucleotide sequence ID" value="NC_011741.1"/>
</dbReference>
<dbReference type="SMR" id="B7M0U3"/>
<dbReference type="GeneID" id="89518067"/>
<dbReference type="KEGG" id="ecr:ECIAI1_3373"/>
<dbReference type="HOGENOM" id="CLU_082184_2_2_6"/>
<dbReference type="GO" id="GO:0022625">
    <property type="term" value="C:cytosolic large ribosomal subunit"/>
    <property type="evidence" value="ECO:0007669"/>
    <property type="project" value="TreeGrafter"/>
</dbReference>
<dbReference type="GO" id="GO:0003729">
    <property type="term" value="F:mRNA binding"/>
    <property type="evidence" value="ECO:0007669"/>
    <property type="project" value="TreeGrafter"/>
</dbReference>
<dbReference type="GO" id="GO:0003735">
    <property type="term" value="F:structural constituent of ribosome"/>
    <property type="evidence" value="ECO:0007669"/>
    <property type="project" value="InterPro"/>
</dbReference>
<dbReference type="GO" id="GO:0017148">
    <property type="term" value="P:negative regulation of translation"/>
    <property type="evidence" value="ECO:0007669"/>
    <property type="project" value="TreeGrafter"/>
</dbReference>
<dbReference type="GO" id="GO:0006412">
    <property type="term" value="P:translation"/>
    <property type="evidence" value="ECO:0007669"/>
    <property type="project" value="UniProtKB-UniRule"/>
</dbReference>
<dbReference type="CDD" id="cd00392">
    <property type="entry name" value="Ribosomal_L13"/>
    <property type="match status" value="1"/>
</dbReference>
<dbReference type="FunFam" id="3.90.1180.10:FF:000001">
    <property type="entry name" value="50S ribosomal protein L13"/>
    <property type="match status" value="1"/>
</dbReference>
<dbReference type="Gene3D" id="3.90.1180.10">
    <property type="entry name" value="Ribosomal protein L13"/>
    <property type="match status" value="1"/>
</dbReference>
<dbReference type="HAMAP" id="MF_01366">
    <property type="entry name" value="Ribosomal_uL13"/>
    <property type="match status" value="1"/>
</dbReference>
<dbReference type="InterPro" id="IPR005822">
    <property type="entry name" value="Ribosomal_uL13"/>
</dbReference>
<dbReference type="InterPro" id="IPR005823">
    <property type="entry name" value="Ribosomal_uL13_bac-type"/>
</dbReference>
<dbReference type="InterPro" id="IPR023563">
    <property type="entry name" value="Ribosomal_uL13_CS"/>
</dbReference>
<dbReference type="InterPro" id="IPR036899">
    <property type="entry name" value="Ribosomal_uL13_sf"/>
</dbReference>
<dbReference type="NCBIfam" id="TIGR01066">
    <property type="entry name" value="rplM_bact"/>
    <property type="match status" value="1"/>
</dbReference>
<dbReference type="PANTHER" id="PTHR11545:SF2">
    <property type="entry name" value="LARGE RIBOSOMAL SUBUNIT PROTEIN UL13M"/>
    <property type="match status" value="1"/>
</dbReference>
<dbReference type="PANTHER" id="PTHR11545">
    <property type="entry name" value="RIBOSOMAL PROTEIN L13"/>
    <property type="match status" value="1"/>
</dbReference>
<dbReference type="Pfam" id="PF00572">
    <property type="entry name" value="Ribosomal_L13"/>
    <property type="match status" value="1"/>
</dbReference>
<dbReference type="PIRSF" id="PIRSF002181">
    <property type="entry name" value="Ribosomal_L13"/>
    <property type="match status" value="1"/>
</dbReference>
<dbReference type="SUPFAM" id="SSF52161">
    <property type="entry name" value="Ribosomal protein L13"/>
    <property type="match status" value="1"/>
</dbReference>
<dbReference type="PROSITE" id="PS00783">
    <property type="entry name" value="RIBOSOMAL_L13"/>
    <property type="match status" value="1"/>
</dbReference>
<proteinExistence type="inferred from homology"/>
<name>RL13_ECO8A</name>